<feature type="chain" id="PRO_0000140306" description="Peptide methionine sulfoxide reductase MsrB">
    <location>
        <begin position="1"/>
        <end position="144"/>
    </location>
</feature>
<feature type="domain" description="MsrB" evidence="2">
    <location>
        <begin position="5"/>
        <end position="128"/>
    </location>
</feature>
<feature type="active site" description="Nucleophile" evidence="2">
    <location>
        <position position="117"/>
    </location>
</feature>
<name>MSRB_STRA5</name>
<gene>
    <name evidence="1" type="primary">msrB</name>
    <name type="ordered locus">SAG0910</name>
</gene>
<organism>
    <name type="scientific">Streptococcus agalactiae serotype V (strain ATCC BAA-611 / 2603 V/R)</name>
    <dbReference type="NCBI Taxonomy" id="208435"/>
    <lineage>
        <taxon>Bacteria</taxon>
        <taxon>Bacillati</taxon>
        <taxon>Bacillota</taxon>
        <taxon>Bacilli</taxon>
        <taxon>Lactobacillales</taxon>
        <taxon>Streptococcaceae</taxon>
        <taxon>Streptococcus</taxon>
    </lineage>
</organism>
<proteinExistence type="inferred from homology"/>
<sequence>MKETQEELRQRIGHTAYQVTQNSATEHAFTGKYDDFFEEGIYVDIVSGEVLFSSLDKFQSGCGWPAFSKPIENRMVTNHQDHSHGMHRIEVRSRQADSHLGHVFNDGPVDAGGLRYCINSAALDFIPYDQMAKRGYGDYLSLFD</sequence>
<comment type="catalytic activity">
    <reaction evidence="1">
        <text>L-methionyl-[protein] + [thioredoxin]-disulfide + H2O = L-methionyl-(R)-S-oxide-[protein] + [thioredoxin]-dithiol</text>
        <dbReference type="Rhea" id="RHEA:24164"/>
        <dbReference type="Rhea" id="RHEA-COMP:10698"/>
        <dbReference type="Rhea" id="RHEA-COMP:10700"/>
        <dbReference type="Rhea" id="RHEA-COMP:12313"/>
        <dbReference type="Rhea" id="RHEA-COMP:12314"/>
        <dbReference type="ChEBI" id="CHEBI:15377"/>
        <dbReference type="ChEBI" id="CHEBI:16044"/>
        <dbReference type="ChEBI" id="CHEBI:29950"/>
        <dbReference type="ChEBI" id="CHEBI:45764"/>
        <dbReference type="ChEBI" id="CHEBI:50058"/>
        <dbReference type="EC" id="1.8.4.12"/>
    </reaction>
</comment>
<comment type="similarity">
    <text evidence="1">Belongs to the MsrB Met sulfoxide reductase family.</text>
</comment>
<reference key="1">
    <citation type="journal article" date="2002" name="Proc. Natl. Acad. Sci. U.S.A.">
        <title>Complete genome sequence and comparative genomic analysis of an emerging human pathogen, serotype V Streptococcus agalactiae.</title>
        <authorList>
            <person name="Tettelin H."/>
            <person name="Masignani V."/>
            <person name="Cieslewicz M.J."/>
            <person name="Eisen J.A."/>
            <person name="Peterson S.N."/>
            <person name="Wessels M.R."/>
            <person name="Paulsen I.T."/>
            <person name="Nelson K.E."/>
            <person name="Margarit I."/>
            <person name="Read T.D."/>
            <person name="Madoff L.C."/>
            <person name="Wolf A.M."/>
            <person name="Beanan M.J."/>
            <person name="Brinkac L.M."/>
            <person name="Daugherty S.C."/>
            <person name="DeBoy R.T."/>
            <person name="Durkin A.S."/>
            <person name="Kolonay J.F."/>
            <person name="Madupu R."/>
            <person name="Lewis M.R."/>
            <person name="Radune D."/>
            <person name="Fedorova N.B."/>
            <person name="Scanlan D."/>
            <person name="Khouri H.M."/>
            <person name="Mulligan S."/>
            <person name="Carty H.A."/>
            <person name="Cline R.T."/>
            <person name="Van Aken S.E."/>
            <person name="Gill J."/>
            <person name="Scarselli M."/>
            <person name="Mora M."/>
            <person name="Iacobini E.T."/>
            <person name="Brettoni C."/>
            <person name="Galli G."/>
            <person name="Mariani M."/>
            <person name="Vegni F."/>
            <person name="Maione D."/>
            <person name="Rinaudo D."/>
            <person name="Rappuoli R."/>
            <person name="Telford J.L."/>
            <person name="Kasper D.L."/>
            <person name="Grandi G."/>
            <person name="Fraser C.M."/>
        </authorList>
    </citation>
    <scope>NUCLEOTIDE SEQUENCE [LARGE SCALE GENOMIC DNA]</scope>
    <source>
        <strain>ATCC BAA-611 / 2603 V/R</strain>
    </source>
</reference>
<accession>Q8E026</accession>
<dbReference type="EC" id="1.8.4.12" evidence="1"/>
<dbReference type="EMBL" id="AE009948">
    <property type="protein sequence ID" value="AAM99796.1"/>
    <property type="molecule type" value="Genomic_DNA"/>
</dbReference>
<dbReference type="RefSeq" id="NP_687924.1">
    <property type="nucleotide sequence ID" value="NC_004116.1"/>
</dbReference>
<dbReference type="RefSeq" id="WP_000665410.1">
    <property type="nucleotide sequence ID" value="NC_004116.1"/>
</dbReference>
<dbReference type="SMR" id="Q8E026"/>
<dbReference type="STRING" id="208435.SAG0910"/>
<dbReference type="KEGG" id="sag:SAG0910"/>
<dbReference type="PATRIC" id="fig|208435.3.peg.915"/>
<dbReference type="HOGENOM" id="CLU_031040_8_5_9"/>
<dbReference type="OrthoDB" id="4174719at2"/>
<dbReference type="Proteomes" id="UP000000821">
    <property type="component" value="Chromosome"/>
</dbReference>
<dbReference type="GO" id="GO:0005737">
    <property type="term" value="C:cytoplasm"/>
    <property type="evidence" value="ECO:0007669"/>
    <property type="project" value="TreeGrafter"/>
</dbReference>
<dbReference type="GO" id="GO:0033743">
    <property type="term" value="F:peptide-methionine (R)-S-oxide reductase activity"/>
    <property type="evidence" value="ECO:0007669"/>
    <property type="project" value="UniProtKB-UniRule"/>
</dbReference>
<dbReference type="GO" id="GO:0030091">
    <property type="term" value="P:protein repair"/>
    <property type="evidence" value="ECO:0007669"/>
    <property type="project" value="InterPro"/>
</dbReference>
<dbReference type="GO" id="GO:0006979">
    <property type="term" value="P:response to oxidative stress"/>
    <property type="evidence" value="ECO:0007669"/>
    <property type="project" value="InterPro"/>
</dbReference>
<dbReference type="FunFam" id="2.170.150.20:FF:000003">
    <property type="entry name" value="Peptide methionine sulfoxide reductase MsrB"/>
    <property type="match status" value="1"/>
</dbReference>
<dbReference type="Gene3D" id="2.170.150.20">
    <property type="entry name" value="Peptide methionine sulfoxide reductase"/>
    <property type="match status" value="1"/>
</dbReference>
<dbReference type="HAMAP" id="MF_01400">
    <property type="entry name" value="MsrB"/>
    <property type="match status" value="1"/>
</dbReference>
<dbReference type="InterPro" id="IPR028427">
    <property type="entry name" value="Met_Sox_Rdtase_MsrB"/>
</dbReference>
<dbReference type="InterPro" id="IPR002579">
    <property type="entry name" value="Met_Sox_Rdtase_MsrB_dom"/>
</dbReference>
<dbReference type="InterPro" id="IPR011057">
    <property type="entry name" value="Mss4-like_sf"/>
</dbReference>
<dbReference type="NCBIfam" id="TIGR00357">
    <property type="entry name" value="peptide-methionine (R)-S-oxide reductase MsrB"/>
    <property type="match status" value="1"/>
</dbReference>
<dbReference type="PANTHER" id="PTHR10173">
    <property type="entry name" value="METHIONINE SULFOXIDE REDUCTASE"/>
    <property type="match status" value="1"/>
</dbReference>
<dbReference type="PANTHER" id="PTHR10173:SF59">
    <property type="entry name" value="PEPTIDE METHIONINE SULFOXIDE REDUCTASE MSRA_MSRB"/>
    <property type="match status" value="1"/>
</dbReference>
<dbReference type="Pfam" id="PF01641">
    <property type="entry name" value="SelR"/>
    <property type="match status" value="1"/>
</dbReference>
<dbReference type="SUPFAM" id="SSF51316">
    <property type="entry name" value="Mss4-like"/>
    <property type="match status" value="1"/>
</dbReference>
<dbReference type="PROSITE" id="PS51790">
    <property type="entry name" value="MSRB"/>
    <property type="match status" value="1"/>
</dbReference>
<keyword id="KW-0560">Oxidoreductase</keyword>
<keyword id="KW-1185">Reference proteome</keyword>
<protein>
    <recommendedName>
        <fullName evidence="1">Peptide methionine sulfoxide reductase MsrB</fullName>
        <ecNumber evidence="1">1.8.4.12</ecNumber>
    </recommendedName>
    <alternativeName>
        <fullName evidence="1">Peptide-methionine (R)-S-oxide reductase</fullName>
    </alternativeName>
</protein>
<evidence type="ECO:0000255" key="1">
    <source>
        <dbReference type="HAMAP-Rule" id="MF_01400"/>
    </source>
</evidence>
<evidence type="ECO:0000255" key="2">
    <source>
        <dbReference type="PROSITE-ProRule" id="PRU01126"/>
    </source>
</evidence>